<comment type="catalytic activity">
    <reaction evidence="1">
        <text>(R)-pantothenate + ATP = (R)-4'-phosphopantothenate + ADP + H(+)</text>
        <dbReference type="Rhea" id="RHEA:16373"/>
        <dbReference type="ChEBI" id="CHEBI:10986"/>
        <dbReference type="ChEBI" id="CHEBI:15378"/>
        <dbReference type="ChEBI" id="CHEBI:29032"/>
        <dbReference type="ChEBI" id="CHEBI:30616"/>
        <dbReference type="ChEBI" id="CHEBI:456216"/>
        <dbReference type="EC" id="2.7.1.33"/>
    </reaction>
</comment>
<comment type="pathway">
    <text evidence="1">Cofactor biosynthesis; coenzyme A biosynthesis; CoA from (R)-pantothenate: step 1/5.</text>
</comment>
<comment type="subcellular location">
    <subcellularLocation>
        <location evidence="1">Cytoplasm</location>
    </subcellularLocation>
</comment>
<comment type="similarity">
    <text evidence="1">Belongs to the prokaryotic pantothenate kinase family.</text>
</comment>
<evidence type="ECO:0000255" key="1">
    <source>
        <dbReference type="HAMAP-Rule" id="MF_00215"/>
    </source>
</evidence>
<protein>
    <recommendedName>
        <fullName evidence="1">Pantothenate kinase</fullName>
        <ecNumber evidence="1">2.7.1.33</ecNumber>
    </recommendedName>
    <alternativeName>
        <fullName evidence="1">Pantothenic acid kinase</fullName>
    </alternativeName>
</protein>
<accession>Q1D9X8</accession>
<keyword id="KW-0067">ATP-binding</keyword>
<keyword id="KW-0173">Coenzyme A biosynthesis</keyword>
<keyword id="KW-0963">Cytoplasm</keyword>
<keyword id="KW-0418">Kinase</keyword>
<keyword id="KW-0547">Nucleotide-binding</keyword>
<keyword id="KW-1185">Reference proteome</keyword>
<keyword id="KW-0808">Transferase</keyword>
<proteinExistence type="inferred from homology"/>
<sequence length="317" mass="35871">MALATGLSPAMFIDLERDAWRALRAATPLPLKSEDIDGLRGLGEHLDLDEVVDVYLPLSRLLNLQVAAAQRLWAEQQAFLGGSTQKVPYIIAIAGSVAVGKSTTARILQALLKRWPDHPRVELVTTDGFLFPNDVLTERDLMKRKGFPESYDRRALVRFLAELKAGRAEVAAPVYSHLVYDVVPGEAQVVRQPDILILEGLNVLQAGAQEGKQMPATFLSDFFDFSIYVDAHEHDIRRWYVNRFLKLQQTAFRDERSYFRRFSELNHEQAIQLAESVWGEINGPNLAQNIAPTRSRARLILLKGPDHKVKRVRLRKL</sequence>
<reference key="1">
    <citation type="journal article" date="2006" name="Proc. Natl. Acad. Sci. U.S.A.">
        <title>Evolution of sensory complexity recorded in a myxobacterial genome.</title>
        <authorList>
            <person name="Goldman B.S."/>
            <person name="Nierman W.C."/>
            <person name="Kaiser D."/>
            <person name="Slater S.C."/>
            <person name="Durkin A.S."/>
            <person name="Eisen J.A."/>
            <person name="Ronning C.M."/>
            <person name="Barbazuk W.B."/>
            <person name="Blanchard M."/>
            <person name="Field C."/>
            <person name="Halling C."/>
            <person name="Hinkle G."/>
            <person name="Iartchuk O."/>
            <person name="Kim H.S."/>
            <person name="Mackenzie C."/>
            <person name="Madupu R."/>
            <person name="Miller N."/>
            <person name="Shvartsbeyn A."/>
            <person name="Sullivan S.A."/>
            <person name="Vaudin M."/>
            <person name="Wiegand R."/>
            <person name="Kaplan H.B."/>
        </authorList>
    </citation>
    <scope>NUCLEOTIDE SEQUENCE [LARGE SCALE GENOMIC DNA]</scope>
    <source>
        <strain>DK1622</strain>
    </source>
</reference>
<gene>
    <name evidence="1" type="primary">coaA</name>
    <name type="ordered locus">MXAN_2325</name>
</gene>
<name>COAA_MYXXD</name>
<organism>
    <name type="scientific">Myxococcus xanthus (strain DK1622)</name>
    <dbReference type="NCBI Taxonomy" id="246197"/>
    <lineage>
        <taxon>Bacteria</taxon>
        <taxon>Pseudomonadati</taxon>
        <taxon>Myxococcota</taxon>
        <taxon>Myxococcia</taxon>
        <taxon>Myxococcales</taxon>
        <taxon>Cystobacterineae</taxon>
        <taxon>Myxococcaceae</taxon>
        <taxon>Myxococcus</taxon>
    </lineage>
</organism>
<dbReference type="EC" id="2.7.1.33" evidence="1"/>
<dbReference type="EMBL" id="CP000113">
    <property type="protein sequence ID" value="ABF92345.1"/>
    <property type="molecule type" value="Genomic_DNA"/>
</dbReference>
<dbReference type="RefSeq" id="WP_011552400.1">
    <property type="nucleotide sequence ID" value="NC_008095.1"/>
</dbReference>
<dbReference type="SMR" id="Q1D9X8"/>
<dbReference type="STRING" id="246197.MXAN_2325"/>
<dbReference type="EnsemblBacteria" id="ABF92345">
    <property type="protein sequence ID" value="ABF92345"/>
    <property type="gene ID" value="MXAN_2325"/>
</dbReference>
<dbReference type="GeneID" id="41359712"/>
<dbReference type="KEGG" id="mxa:MXAN_2325"/>
<dbReference type="eggNOG" id="COG1072">
    <property type="taxonomic scope" value="Bacteria"/>
</dbReference>
<dbReference type="HOGENOM" id="CLU_053818_1_1_7"/>
<dbReference type="OrthoDB" id="1550976at2"/>
<dbReference type="UniPathway" id="UPA00241">
    <property type="reaction ID" value="UER00352"/>
</dbReference>
<dbReference type="Proteomes" id="UP000002402">
    <property type="component" value="Chromosome"/>
</dbReference>
<dbReference type="GO" id="GO:0005737">
    <property type="term" value="C:cytoplasm"/>
    <property type="evidence" value="ECO:0007669"/>
    <property type="project" value="UniProtKB-SubCell"/>
</dbReference>
<dbReference type="GO" id="GO:0005524">
    <property type="term" value="F:ATP binding"/>
    <property type="evidence" value="ECO:0007669"/>
    <property type="project" value="UniProtKB-UniRule"/>
</dbReference>
<dbReference type="GO" id="GO:0004594">
    <property type="term" value="F:pantothenate kinase activity"/>
    <property type="evidence" value="ECO:0007669"/>
    <property type="project" value="UniProtKB-UniRule"/>
</dbReference>
<dbReference type="GO" id="GO:0015937">
    <property type="term" value="P:coenzyme A biosynthetic process"/>
    <property type="evidence" value="ECO:0007669"/>
    <property type="project" value="UniProtKB-UniRule"/>
</dbReference>
<dbReference type="CDD" id="cd02025">
    <property type="entry name" value="PanK"/>
    <property type="match status" value="1"/>
</dbReference>
<dbReference type="Gene3D" id="3.40.50.300">
    <property type="entry name" value="P-loop containing nucleotide triphosphate hydrolases"/>
    <property type="match status" value="1"/>
</dbReference>
<dbReference type="HAMAP" id="MF_00215">
    <property type="entry name" value="Pantothen_kinase_1"/>
    <property type="match status" value="1"/>
</dbReference>
<dbReference type="InterPro" id="IPR027417">
    <property type="entry name" value="P-loop_NTPase"/>
</dbReference>
<dbReference type="InterPro" id="IPR004566">
    <property type="entry name" value="PanK"/>
</dbReference>
<dbReference type="InterPro" id="IPR006083">
    <property type="entry name" value="PRK/URK"/>
</dbReference>
<dbReference type="NCBIfam" id="TIGR00554">
    <property type="entry name" value="panK_bact"/>
    <property type="match status" value="1"/>
</dbReference>
<dbReference type="PANTHER" id="PTHR10285">
    <property type="entry name" value="URIDINE KINASE"/>
    <property type="match status" value="1"/>
</dbReference>
<dbReference type="Pfam" id="PF00485">
    <property type="entry name" value="PRK"/>
    <property type="match status" value="1"/>
</dbReference>
<dbReference type="PIRSF" id="PIRSF000545">
    <property type="entry name" value="Pantothenate_kin"/>
    <property type="match status" value="1"/>
</dbReference>
<dbReference type="SUPFAM" id="SSF52540">
    <property type="entry name" value="P-loop containing nucleoside triphosphate hydrolases"/>
    <property type="match status" value="1"/>
</dbReference>
<feature type="chain" id="PRO_0000325557" description="Pantothenate kinase">
    <location>
        <begin position="1"/>
        <end position="317"/>
    </location>
</feature>
<feature type="binding site" evidence="1">
    <location>
        <begin position="95"/>
        <end position="102"/>
    </location>
    <ligand>
        <name>ATP</name>
        <dbReference type="ChEBI" id="CHEBI:30616"/>
    </ligand>
</feature>